<dbReference type="EMBL" id="AY424300">
    <property type="protein sequence ID" value="AAR08388.1"/>
    <property type="molecule type" value="mRNA"/>
</dbReference>
<dbReference type="EMBL" id="AK004819">
    <property type="protein sequence ID" value="BAB23590.1"/>
    <property type="molecule type" value="mRNA"/>
</dbReference>
<dbReference type="EMBL" id="AK011418">
    <property type="protein sequence ID" value="BAB27606.1"/>
    <property type="molecule type" value="mRNA"/>
</dbReference>
<dbReference type="EMBL" id="AK158577">
    <property type="protein sequence ID" value="BAE34564.1"/>
    <property type="molecule type" value="mRNA"/>
</dbReference>
<dbReference type="EMBL" id="AK171637">
    <property type="protein sequence ID" value="BAE42577.1"/>
    <property type="molecule type" value="mRNA"/>
</dbReference>
<dbReference type="EMBL" id="AL626785">
    <property type="protein sequence ID" value="CAI24626.1"/>
    <property type="status" value="ALT_SEQ"/>
    <property type="molecule type" value="Genomic_DNA"/>
</dbReference>
<dbReference type="EMBL" id="AL626785">
    <property type="protein sequence ID" value="CAI24627.1"/>
    <property type="molecule type" value="Genomic_DNA"/>
</dbReference>
<dbReference type="EMBL" id="BC021914">
    <property type="protein sequence ID" value="AAH21914.1"/>
    <property type="molecule type" value="mRNA"/>
</dbReference>
<dbReference type="CCDS" id="CCDS25240.1"/>
<dbReference type="RefSeq" id="NP_080454.1">
    <property type="nucleotide sequence ID" value="NM_026178.2"/>
</dbReference>
<dbReference type="SMR" id="Q9CQY7"/>
<dbReference type="BioGRID" id="212210">
    <property type="interactions" value="1"/>
</dbReference>
<dbReference type="FunCoup" id="Q9CQY7">
    <property type="interactions" value="523"/>
</dbReference>
<dbReference type="STRING" id="10090.ENSMUSP00000004050"/>
<dbReference type="iPTMnet" id="Q9CQY7"/>
<dbReference type="PhosphoSitePlus" id="Q9CQY7"/>
<dbReference type="PaxDb" id="10090-ENSMUSP00000004050"/>
<dbReference type="ProteomicsDB" id="294010"/>
<dbReference type="Antibodypedia" id="52797">
    <property type="antibodies" value="8 antibodies from 6 providers"/>
</dbReference>
<dbReference type="DNASU" id="67468"/>
<dbReference type="Ensembl" id="ENSMUST00000004050.7">
    <property type="protein sequence ID" value="ENSMUSP00000004050.7"/>
    <property type="gene ID" value="ENSMUSG00000003948.18"/>
</dbReference>
<dbReference type="GeneID" id="67468"/>
<dbReference type="KEGG" id="mmu:67468"/>
<dbReference type="UCSC" id="uc007kwo.1">
    <property type="organism name" value="mouse"/>
</dbReference>
<dbReference type="AGR" id="MGI:1914718"/>
<dbReference type="CTD" id="23531"/>
<dbReference type="MGI" id="MGI:1914718">
    <property type="gene designation" value="Mmd"/>
</dbReference>
<dbReference type="VEuPathDB" id="HostDB:ENSMUSG00000003948"/>
<dbReference type="eggNOG" id="KOG4243">
    <property type="taxonomic scope" value="Eukaryota"/>
</dbReference>
<dbReference type="GeneTree" id="ENSGT00940000157428"/>
<dbReference type="HOGENOM" id="CLU_051078_0_0_1"/>
<dbReference type="InParanoid" id="Q9CQY7"/>
<dbReference type="OMA" id="NAWTHLV"/>
<dbReference type="OrthoDB" id="186812at2759"/>
<dbReference type="PhylomeDB" id="Q9CQY7"/>
<dbReference type="TreeFam" id="TF313370"/>
<dbReference type="BioGRID-ORCS" id="67468">
    <property type="hits" value="5 hits in 79 CRISPR screens"/>
</dbReference>
<dbReference type="ChiTaRS" id="Mmd">
    <property type="organism name" value="mouse"/>
</dbReference>
<dbReference type="PRO" id="PR:Q9CQY7"/>
<dbReference type="Proteomes" id="UP000000589">
    <property type="component" value="Chromosome 11"/>
</dbReference>
<dbReference type="RNAct" id="Q9CQY7">
    <property type="molecule type" value="protein"/>
</dbReference>
<dbReference type="Bgee" id="ENSMUSG00000003948">
    <property type="expression patterns" value="Expressed in epididymal fat pad and 271 other cell types or tissues"/>
</dbReference>
<dbReference type="ExpressionAtlas" id="Q9CQY7">
    <property type="expression patterns" value="baseline and differential"/>
</dbReference>
<dbReference type="GO" id="GO:0005794">
    <property type="term" value="C:Golgi apparatus"/>
    <property type="evidence" value="ECO:0007669"/>
    <property type="project" value="Ensembl"/>
</dbReference>
<dbReference type="GO" id="GO:0031902">
    <property type="term" value="C:late endosome membrane"/>
    <property type="evidence" value="ECO:0007669"/>
    <property type="project" value="UniProtKB-SubCell"/>
</dbReference>
<dbReference type="GO" id="GO:0005765">
    <property type="term" value="C:lysosomal membrane"/>
    <property type="evidence" value="ECO:0007669"/>
    <property type="project" value="UniProtKB-SubCell"/>
</dbReference>
<dbReference type="GO" id="GO:0140911">
    <property type="term" value="F:pore-forming activity"/>
    <property type="evidence" value="ECO:0007669"/>
    <property type="project" value="InterPro"/>
</dbReference>
<dbReference type="GO" id="GO:0004672">
    <property type="term" value="F:protein kinase activity"/>
    <property type="evidence" value="ECO:0007669"/>
    <property type="project" value="Ensembl"/>
</dbReference>
<dbReference type="GO" id="GO:0045666">
    <property type="term" value="P:positive regulation of neuron differentiation"/>
    <property type="evidence" value="ECO:0007669"/>
    <property type="project" value="Ensembl"/>
</dbReference>
<dbReference type="GO" id="GO:0032880">
    <property type="term" value="P:regulation of protein localization"/>
    <property type="evidence" value="ECO:0007669"/>
    <property type="project" value="Ensembl"/>
</dbReference>
<dbReference type="InterPro" id="IPR004254">
    <property type="entry name" value="AdipoR/HlyIII-related"/>
</dbReference>
<dbReference type="InterPro" id="IPR005744">
    <property type="entry name" value="Hy-lIII"/>
</dbReference>
<dbReference type="NCBIfam" id="TIGR01065">
    <property type="entry name" value="hlyIII"/>
    <property type="match status" value="1"/>
</dbReference>
<dbReference type="PANTHER" id="PTHR20855">
    <property type="entry name" value="ADIPOR/PROGESTIN RECEPTOR-RELATED"/>
    <property type="match status" value="1"/>
</dbReference>
<dbReference type="PANTHER" id="PTHR20855:SF26">
    <property type="entry name" value="MONOCYTE TO MACROPHAGE DIFFERENTIATION FACTOR"/>
    <property type="match status" value="1"/>
</dbReference>
<dbReference type="Pfam" id="PF03006">
    <property type="entry name" value="HlyIII"/>
    <property type="match status" value="1"/>
</dbReference>
<evidence type="ECO:0000250" key="1"/>
<evidence type="ECO:0000250" key="2">
    <source>
        <dbReference type="UniProtKB" id="Q15546"/>
    </source>
</evidence>
<evidence type="ECO:0000255" key="3"/>
<evidence type="ECO:0000303" key="4">
    <source>
    </source>
</evidence>
<evidence type="ECO:0000305" key="5"/>
<evidence type="ECO:0000312" key="6">
    <source>
        <dbReference type="MGI" id="MGI:1914718"/>
    </source>
</evidence>
<organism>
    <name type="scientific">Mus musculus</name>
    <name type="common">Mouse</name>
    <dbReference type="NCBI Taxonomy" id="10090"/>
    <lineage>
        <taxon>Eukaryota</taxon>
        <taxon>Metazoa</taxon>
        <taxon>Chordata</taxon>
        <taxon>Craniata</taxon>
        <taxon>Vertebrata</taxon>
        <taxon>Euteleostomi</taxon>
        <taxon>Mammalia</taxon>
        <taxon>Eutheria</taxon>
        <taxon>Euarchontoglires</taxon>
        <taxon>Glires</taxon>
        <taxon>Rodentia</taxon>
        <taxon>Myomorpha</taxon>
        <taxon>Muroidea</taxon>
        <taxon>Muridae</taxon>
        <taxon>Murinae</taxon>
        <taxon>Mus</taxon>
        <taxon>Mus</taxon>
    </lineage>
</organism>
<protein>
    <recommendedName>
        <fullName evidence="2">Monocyte to macrophage differentiation factor</fullName>
    </recommendedName>
    <alternativeName>
        <fullName evidence="4">Progestin and adipoQ receptor family member 11</fullName>
    </alternativeName>
    <alternativeName>
        <fullName>Progestin and adipoQ receptor family member XI</fullName>
    </alternativeName>
</protein>
<reference key="1">
    <citation type="journal article" date="2005" name="J. Mol. Evol.">
        <title>PAQR proteins: a novel membrane receptor family defined by an ancient 7-transmembrane pass motif.</title>
        <authorList>
            <person name="Tang Y.T."/>
            <person name="Hu T."/>
            <person name="Arterburn M."/>
            <person name="Boyle B."/>
            <person name="Bright J.M."/>
            <person name="Emtage P.C."/>
            <person name="Funk W.D."/>
        </authorList>
    </citation>
    <scope>NUCLEOTIDE SEQUENCE [MRNA]</scope>
    <source>
        <strain>C57BL/6J</strain>
    </source>
</reference>
<reference key="2">
    <citation type="journal article" date="2005" name="Science">
        <title>The transcriptional landscape of the mammalian genome.</title>
        <authorList>
            <person name="Carninci P."/>
            <person name="Kasukawa T."/>
            <person name="Katayama S."/>
            <person name="Gough J."/>
            <person name="Frith M.C."/>
            <person name="Maeda N."/>
            <person name="Oyama R."/>
            <person name="Ravasi T."/>
            <person name="Lenhard B."/>
            <person name="Wells C."/>
            <person name="Kodzius R."/>
            <person name="Shimokawa K."/>
            <person name="Bajic V.B."/>
            <person name="Brenner S.E."/>
            <person name="Batalov S."/>
            <person name="Forrest A.R."/>
            <person name="Zavolan M."/>
            <person name="Davis M.J."/>
            <person name="Wilming L.G."/>
            <person name="Aidinis V."/>
            <person name="Allen J.E."/>
            <person name="Ambesi-Impiombato A."/>
            <person name="Apweiler R."/>
            <person name="Aturaliya R.N."/>
            <person name="Bailey T.L."/>
            <person name="Bansal M."/>
            <person name="Baxter L."/>
            <person name="Beisel K.W."/>
            <person name="Bersano T."/>
            <person name="Bono H."/>
            <person name="Chalk A.M."/>
            <person name="Chiu K.P."/>
            <person name="Choudhary V."/>
            <person name="Christoffels A."/>
            <person name="Clutterbuck D.R."/>
            <person name="Crowe M.L."/>
            <person name="Dalla E."/>
            <person name="Dalrymple B.P."/>
            <person name="de Bono B."/>
            <person name="Della Gatta G."/>
            <person name="di Bernardo D."/>
            <person name="Down T."/>
            <person name="Engstrom P."/>
            <person name="Fagiolini M."/>
            <person name="Faulkner G."/>
            <person name="Fletcher C.F."/>
            <person name="Fukushima T."/>
            <person name="Furuno M."/>
            <person name="Futaki S."/>
            <person name="Gariboldi M."/>
            <person name="Georgii-Hemming P."/>
            <person name="Gingeras T.R."/>
            <person name="Gojobori T."/>
            <person name="Green R.E."/>
            <person name="Gustincich S."/>
            <person name="Harbers M."/>
            <person name="Hayashi Y."/>
            <person name="Hensch T.K."/>
            <person name="Hirokawa N."/>
            <person name="Hill D."/>
            <person name="Huminiecki L."/>
            <person name="Iacono M."/>
            <person name="Ikeo K."/>
            <person name="Iwama A."/>
            <person name="Ishikawa T."/>
            <person name="Jakt M."/>
            <person name="Kanapin A."/>
            <person name="Katoh M."/>
            <person name="Kawasawa Y."/>
            <person name="Kelso J."/>
            <person name="Kitamura H."/>
            <person name="Kitano H."/>
            <person name="Kollias G."/>
            <person name="Krishnan S.P."/>
            <person name="Kruger A."/>
            <person name="Kummerfeld S.K."/>
            <person name="Kurochkin I.V."/>
            <person name="Lareau L.F."/>
            <person name="Lazarevic D."/>
            <person name="Lipovich L."/>
            <person name="Liu J."/>
            <person name="Liuni S."/>
            <person name="McWilliam S."/>
            <person name="Madan Babu M."/>
            <person name="Madera M."/>
            <person name="Marchionni L."/>
            <person name="Matsuda H."/>
            <person name="Matsuzawa S."/>
            <person name="Miki H."/>
            <person name="Mignone F."/>
            <person name="Miyake S."/>
            <person name="Morris K."/>
            <person name="Mottagui-Tabar S."/>
            <person name="Mulder N."/>
            <person name="Nakano N."/>
            <person name="Nakauchi H."/>
            <person name="Ng P."/>
            <person name="Nilsson R."/>
            <person name="Nishiguchi S."/>
            <person name="Nishikawa S."/>
            <person name="Nori F."/>
            <person name="Ohara O."/>
            <person name="Okazaki Y."/>
            <person name="Orlando V."/>
            <person name="Pang K.C."/>
            <person name="Pavan W.J."/>
            <person name="Pavesi G."/>
            <person name="Pesole G."/>
            <person name="Petrovsky N."/>
            <person name="Piazza S."/>
            <person name="Reed J."/>
            <person name="Reid J.F."/>
            <person name="Ring B.Z."/>
            <person name="Ringwald M."/>
            <person name="Rost B."/>
            <person name="Ruan Y."/>
            <person name="Salzberg S.L."/>
            <person name="Sandelin A."/>
            <person name="Schneider C."/>
            <person name="Schoenbach C."/>
            <person name="Sekiguchi K."/>
            <person name="Semple C.A."/>
            <person name="Seno S."/>
            <person name="Sessa L."/>
            <person name="Sheng Y."/>
            <person name="Shibata Y."/>
            <person name="Shimada H."/>
            <person name="Shimada K."/>
            <person name="Silva D."/>
            <person name="Sinclair B."/>
            <person name="Sperling S."/>
            <person name="Stupka E."/>
            <person name="Sugiura K."/>
            <person name="Sultana R."/>
            <person name="Takenaka Y."/>
            <person name="Taki K."/>
            <person name="Tammoja K."/>
            <person name="Tan S.L."/>
            <person name="Tang S."/>
            <person name="Taylor M.S."/>
            <person name="Tegner J."/>
            <person name="Teichmann S.A."/>
            <person name="Ueda H.R."/>
            <person name="van Nimwegen E."/>
            <person name="Verardo R."/>
            <person name="Wei C.L."/>
            <person name="Yagi K."/>
            <person name="Yamanishi H."/>
            <person name="Zabarovsky E."/>
            <person name="Zhu S."/>
            <person name="Zimmer A."/>
            <person name="Hide W."/>
            <person name="Bult C."/>
            <person name="Grimmond S.M."/>
            <person name="Teasdale R.D."/>
            <person name="Liu E.T."/>
            <person name="Brusic V."/>
            <person name="Quackenbush J."/>
            <person name="Wahlestedt C."/>
            <person name="Mattick J.S."/>
            <person name="Hume D.A."/>
            <person name="Kai C."/>
            <person name="Sasaki D."/>
            <person name="Tomaru Y."/>
            <person name="Fukuda S."/>
            <person name="Kanamori-Katayama M."/>
            <person name="Suzuki M."/>
            <person name="Aoki J."/>
            <person name="Arakawa T."/>
            <person name="Iida J."/>
            <person name="Imamura K."/>
            <person name="Itoh M."/>
            <person name="Kato T."/>
            <person name="Kawaji H."/>
            <person name="Kawagashira N."/>
            <person name="Kawashima T."/>
            <person name="Kojima M."/>
            <person name="Kondo S."/>
            <person name="Konno H."/>
            <person name="Nakano K."/>
            <person name="Ninomiya N."/>
            <person name="Nishio T."/>
            <person name="Okada M."/>
            <person name="Plessy C."/>
            <person name="Shibata K."/>
            <person name="Shiraki T."/>
            <person name="Suzuki S."/>
            <person name="Tagami M."/>
            <person name="Waki K."/>
            <person name="Watahiki A."/>
            <person name="Okamura-Oho Y."/>
            <person name="Suzuki H."/>
            <person name="Kawai J."/>
            <person name="Hayashizaki Y."/>
        </authorList>
    </citation>
    <scope>NUCLEOTIDE SEQUENCE [LARGE SCALE MRNA]</scope>
    <source>
        <strain>C57BL/6J</strain>
        <tissue>Embryo</tissue>
        <tissue>Lung</tissue>
        <tissue>Visual cortex</tissue>
    </source>
</reference>
<reference key="3">
    <citation type="journal article" date="2009" name="PLoS Biol.">
        <title>Lineage-specific biology revealed by a finished genome assembly of the mouse.</title>
        <authorList>
            <person name="Church D.M."/>
            <person name="Goodstadt L."/>
            <person name="Hillier L.W."/>
            <person name="Zody M.C."/>
            <person name="Goldstein S."/>
            <person name="She X."/>
            <person name="Bult C.J."/>
            <person name="Agarwala R."/>
            <person name="Cherry J.L."/>
            <person name="DiCuccio M."/>
            <person name="Hlavina W."/>
            <person name="Kapustin Y."/>
            <person name="Meric P."/>
            <person name="Maglott D."/>
            <person name="Birtle Z."/>
            <person name="Marques A.C."/>
            <person name="Graves T."/>
            <person name="Zhou S."/>
            <person name="Teague B."/>
            <person name="Potamousis K."/>
            <person name="Churas C."/>
            <person name="Place M."/>
            <person name="Herschleb J."/>
            <person name="Runnheim R."/>
            <person name="Forrest D."/>
            <person name="Amos-Landgraf J."/>
            <person name="Schwartz D.C."/>
            <person name="Cheng Z."/>
            <person name="Lindblad-Toh K."/>
            <person name="Eichler E.E."/>
            <person name="Ponting C.P."/>
        </authorList>
    </citation>
    <scope>NUCLEOTIDE SEQUENCE [LARGE SCALE GENOMIC DNA]</scope>
    <source>
        <strain>C57BL/6J</strain>
    </source>
</reference>
<reference key="4">
    <citation type="journal article" date="2004" name="Genome Res.">
        <title>The status, quality, and expansion of the NIH full-length cDNA project: the Mammalian Gene Collection (MGC).</title>
        <authorList>
            <consortium name="The MGC Project Team"/>
        </authorList>
    </citation>
    <scope>NUCLEOTIDE SEQUENCE [LARGE SCALE MRNA]</scope>
    <source>
        <tissue>Eye</tissue>
    </source>
</reference>
<proteinExistence type="evidence at transcript level"/>
<gene>
    <name evidence="6" type="primary">Mmd</name>
    <name evidence="4" type="synonym">Paqr11</name>
</gene>
<keyword id="KW-0967">Endosome</keyword>
<keyword id="KW-0458">Lysosome</keyword>
<keyword id="KW-0472">Membrane</keyword>
<keyword id="KW-0675">Receptor</keyword>
<keyword id="KW-1185">Reference proteome</keyword>
<keyword id="KW-0812">Transmembrane</keyword>
<keyword id="KW-1133">Transmembrane helix</keyword>
<feature type="chain" id="PRO_0000218855" description="Monocyte to macrophage differentiation factor">
    <location>
        <begin position="1"/>
        <end position="238"/>
    </location>
</feature>
<feature type="topological domain" description="Cytoplasmic" evidence="3">
    <location>
        <begin position="1"/>
        <end position="28"/>
    </location>
</feature>
<feature type="transmembrane region" description="Helical" evidence="3">
    <location>
        <begin position="29"/>
        <end position="49"/>
    </location>
</feature>
<feature type="topological domain" description="Lumenal" evidence="3">
    <location>
        <begin position="50"/>
        <end position="61"/>
    </location>
</feature>
<feature type="transmembrane region" description="Helical" evidence="3">
    <location>
        <begin position="62"/>
        <end position="82"/>
    </location>
</feature>
<feature type="topological domain" description="Cytoplasmic" evidence="3">
    <location>
        <begin position="83"/>
        <end position="101"/>
    </location>
</feature>
<feature type="transmembrane region" description="Helical" evidence="3">
    <location>
        <begin position="102"/>
        <end position="122"/>
    </location>
</feature>
<feature type="topological domain" description="Lumenal" evidence="3">
    <location>
        <position position="123"/>
    </location>
</feature>
<feature type="transmembrane region" description="Helical" evidence="3">
    <location>
        <begin position="124"/>
        <end position="144"/>
    </location>
</feature>
<feature type="topological domain" description="Cytoplasmic" evidence="3">
    <location>
        <begin position="145"/>
        <end position="151"/>
    </location>
</feature>
<feature type="transmembrane region" description="Helical" evidence="3">
    <location>
        <begin position="152"/>
        <end position="172"/>
    </location>
</feature>
<feature type="topological domain" description="Lumenal" evidence="3">
    <location>
        <begin position="173"/>
        <end position="174"/>
    </location>
</feature>
<feature type="transmembrane region" description="Helical" evidence="3">
    <location>
        <begin position="175"/>
        <end position="195"/>
    </location>
</feature>
<feature type="topological domain" description="Cytoplasmic" evidence="3">
    <location>
        <begin position="196"/>
        <end position="198"/>
    </location>
</feature>
<feature type="transmembrane region" description="Helical" evidence="3">
    <location>
        <begin position="199"/>
        <end position="219"/>
    </location>
</feature>
<feature type="topological domain" description="Lumenal" evidence="3">
    <location>
        <begin position="220"/>
        <end position="238"/>
    </location>
</feature>
<comment type="function">
    <text evidence="1">Involved in the dynamics of lysosomal membranes associated with microglial activation following brain lesion.</text>
</comment>
<comment type="subcellular location">
    <subcellularLocation>
        <location evidence="1">Late endosome membrane</location>
        <topology evidence="1">Multi-pass membrane protein</topology>
    </subcellularLocation>
    <subcellularLocation>
        <location evidence="1">Lysosome membrane</location>
        <topology evidence="1">Multi-pass membrane protein</topology>
    </subcellularLocation>
</comment>
<comment type="similarity">
    <text evidence="5">Belongs to the ADIPOR family.</text>
</comment>
<comment type="sequence caution" evidence="5">
    <conflict type="erroneous gene model prediction">
        <sequence resource="EMBL-CDS" id="CAI24626"/>
    </conflict>
</comment>
<sequence>MRFRNRFQRFMNHRAPANGRYKPTCYEHAANCYTHAFLIVPAIVGSALLHRLSDDCWEKITAWIYGMGLCALFIVSTVFHIVSWKKSHLRTVEHCFHMCDRMVIYFFIAASYAPWLNLRELGPLASHMRWFIWLMAAGGTIYVFLYHEKYKVVELFFYLTMGFSPALVVTSMNNTDGLQELACGGLIYCLGVVFFKSDGIIPFAHAIWHLFVATAAAVHYYAIWKYLYRSPTDFIRHL</sequence>
<name>PAQRB_MOUSE</name>
<accession>Q9CQY7</accession>
<accession>Q3TAU1</accession>
<accession>Q5SVU7</accession>